<feature type="chain" id="PRO_1000089454" description="Octanoyltransferase">
    <location>
        <begin position="1"/>
        <end position="200"/>
    </location>
</feature>
<feature type="domain" description="BPL/LPL catalytic" evidence="2">
    <location>
        <begin position="27"/>
        <end position="200"/>
    </location>
</feature>
<feature type="active site" description="Acyl-thioester intermediate" evidence="1">
    <location>
        <position position="165"/>
    </location>
</feature>
<feature type="binding site" evidence="1">
    <location>
        <begin position="66"/>
        <end position="73"/>
    </location>
    <ligand>
        <name>substrate</name>
    </ligand>
</feature>
<feature type="binding site" evidence="1">
    <location>
        <begin position="134"/>
        <end position="136"/>
    </location>
    <ligand>
        <name>substrate</name>
    </ligand>
</feature>
<feature type="binding site" evidence="1">
    <location>
        <begin position="147"/>
        <end position="149"/>
    </location>
    <ligand>
        <name>substrate</name>
    </ligand>
</feature>
<feature type="site" description="Lowers pKa of active site Cys" evidence="1">
    <location>
        <position position="131"/>
    </location>
</feature>
<comment type="function">
    <text evidence="1">Catalyzes the transfer of endogenously produced octanoic acid from octanoyl-acyl-carrier-protein onto the lipoyl domains of lipoate-dependent enzymes. Lipoyl-ACP can also act as a substrate although octanoyl-ACP is likely to be the physiological substrate.</text>
</comment>
<comment type="catalytic activity">
    <reaction evidence="1">
        <text>octanoyl-[ACP] + L-lysyl-[protein] = N(6)-octanoyl-L-lysyl-[protein] + holo-[ACP] + H(+)</text>
        <dbReference type="Rhea" id="RHEA:17665"/>
        <dbReference type="Rhea" id="RHEA-COMP:9636"/>
        <dbReference type="Rhea" id="RHEA-COMP:9685"/>
        <dbReference type="Rhea" id="RHEA-COMP:9752"/>
        <dbReference type="Rhea" id="RHEA-COMP:9928"/>
        <dbReference type="ChEBI" id="CHEBI:15378"/>
        <dbReference type="ChEBI" id="CHEBI:29969"/>
        <dbReference type="ChEBI" id="CHEBI:64479"/>
        <dbReference type="ChEBI" id="CHEBI:78463"/>
        <dbReference type="ChEBI" id="CHEBI:78809"/>
        <dbReference type="EC" id="2.3.1.181"/>
    </reaction>
</comment>
<comment type="pathway">
    <text evidence="1">Protein modification; protein lipoylation via endogenous pathway; protein N(6)-(lipoyl)lysine from octanoyl-[acyl-carrier-protein]: step 1/2.</text>
</comment>
<comment type="subcellular location">
    <subcellularLocation>
        <location evidence="1">Cytoplasm</location>
    </subcellularLocation>
</comment>
<comment type="miscellaneous">
    <text evidence="1">In the reaction, the free carboxyl group of octanoic acid is attached via an amide linkage to the epsilon-amino group of a specific lysine residue of lipoyl domains of lipoate-dependent enzymes.</text>
</comment>
<comment type="similarity">
    <text evidence="1">Belongs to the LipB family.</text>
</comment>
<sequence length="200" mass="22113">MLIQQLGRQDYVSVWQKMQDFTRQRGGAEDDQLWLVEHYPVYTQGQAGKAEHILNTGNIPVIQIDRGGQITYHGLGQAVIYPLLSLKAANIGIRRFVSLVEETTIALLQDYAVAAHARADAPGVYVADGRKIASLGFKVSRGCSYHGIAINVAMDLSPFLGINPCGLSGMKMAQLSEFVPEIDVDSVHKKWAELFSARWR</sequence>
<gene>
    <name evidence="1" type="primary">lipB</name>
    <name type="ordered locus">DNO_0897</name>
</gene>
<dbReference type="EC" id="2.3.1.181" evidence="1"/>
<dbReference type="EMBL" id="CP000513">
    <property type="protein sequence ID" value="ABQ14203.1"/>
    <property type="molecule type" value="Genomic_DNA"/>
</dbReference>
<dbReference type="RefSeq" id="WP_012031213.1">
    <property type="nucleotide sequence ID" value="NC_009446.1"/>
</dbReference>
<dbReference type="SMR" id="A5EY93"/>
<dbReference type="STRING" id="246195.DNO_0897"/>
<dbReference type="KEGG" id="dno:DNO_0897"/>
<dbReference type="eggNOG" id="COG0321">
    <property type="taxonomic scope" value="Bacteria"/>
</dbReference>
<dbReference type="HOGENOM" id="CLU_035168_3_1_6"/>
<dbReference type="OrthoDB" id="9787061at2"/>
<dbReference type="UniPathway" id="UPA00538">
    <property type="reaction ID" value="UER00592"/>
</dbReference>
<dbReference type="Proteomes" id="UP000000248">
    <property type="component" value="Chromosome"/>
</dbReference>
<dbReference type="GO" id="GO:0005737">
    <property type="term" value="C:cytoplasm"/>
    <property type="evidence" value="ECO:0007669"/>
    <property type="project" value="UniProtKB-SubCell"/>
</dbReference>
<dbReference type="GO" id="GO:0033819">
    <property type="term" value="F:lipoyl(octanoyl) transferase activity"/>
    <property type="evidence" value="ECO:0007669"/>
    <property type="project" value="UniProtKB-EC"/>
</dbReference>
<dbReference type="GO" id="GO:0036211">
    <property type="term" value="P:protein modification process"/>
    <property type="evidence" value="ECO:0007669"/>
    <property type="project" value="InterPro"/>
</dbReference>
<dbReference type="CDD" id="cd16444">
    <property type="entry name" value="LipB"/>
    <property type="match status" value="1"/>
</dbReference>
<dbReference type="FunFam" id="3.30.930.10:FF:000020">
    <property type="entry name" value="Octanoyltransferase"/>
    <property type="match status" value="1"/>
</dbReference>
<dbReference type="Gene3D" id="3.30.930.10">
    <property type="entry name" value="Bira Bifunctional Protein, Domain 2"/>
    <property type="match status" value="1"/>
</dbReference>
<dbReference type="HAMAP" id="MF_00013">
    <property type="entry name" value="LipB"/>
    <property type="match status" value="1"/>
</dbReference>
<dbReference type="InterPro" id="IPR045864">
    <property type="entry name" value="aa-tRNA-synth_II/BPL/LPL"/>
</dbReference>
<dbReference type="InterPro" id="IPR004143">
    <property type="entry name" value="BPL_LPL_catalytic"/>
</dbReference>
<dbReference type="InterPro" id="IPR000544">
    <property type="entry name" value="Octanoyltransferase"/>
</dbReference>
<dbReference type="InterPro" id="IPR020605">
    <property type="entry name" value="Octanoyltransferase_CS"/>
</dbReference>
<dbReference type="NCBIfam" id="TIGR00214">
    <property type="entry name" value="lipB"/>
    <property type="match status" value="1"/>
</dbReference>
<dbReference type="NCBIfam" id="NF010922">
    <property type="entry name" value="PRK14342.1"/>
    <property type="match status" value="1"/>
</dbReference>
<dbReference type="PANTHER" id="PTHR10993:SF7">
    <property type="entry name" value="LIPOYLTRANSFERASE 2, MITOCHONDRIAL-RELATED"/>
    <property type="match status" value="1"/>
</dbReference>
<dbReference type="PANTHER" id="PTHR10993">
    <property type="entry name" value="OCTANOYLTRANSFERASE"/>
    <property type="match status" value="1"/>
</dbReference>
<dbReference type="Pfam" id="PF21948">
    <property type="entry name" value="LplA-B_cat"/>
    <property type="match status" value="1"/>
</dbReference>
<dbReference type="PIRSF" id="PIRSF016262">
    <property type="entry name" value="LPLase"/>
    <property type="match status" value="1"/>
</dbReference>
<dbReference type="SUPFAM" id="SSF55681">
    <property type="entry name" value="Class II aaRS and biotin synthetases"/>
    <property type="match status" value="1"/>
</dbReference>
<dbReference type="PROSITE" id="PS51733">
    <property type="entry name" value="BPL_LPL_CATALYTIC"/>
    <property type="match status" value="1"/>
</dbReference>
<dbReference type="PROSITE" id="PS01313">
    <property type="entry name" value="LIPB"/>
    <property type="match status" value="1"/>
</dbReference>
<evidence type="ECO:0000255" key="1">
    <source>
        <dbReference type="HAMAP-Rule" id="MF_00013"/>
    </source>
</evidence>
<evidence type="ECO:0000255" key="2">
    <source>
        <dbReference type="PROSITE-ProRule" id="PRU01067"/>
    </source>
</evidence>
<name>LIPB_DICNV</name>
<organism>
    <name type="scientific">Dichelobacter nodosus (strain VCS1703A)</name>
    <dbReference type="NCBI Taxonomy" id="246195"/>
    <lineage>
        <taxon>Bacteria</taxon>
        <taxon>Pseudomonadati</taxon>
        <taxon>Pseudomonadota</taxon>
        <taxon>Gammaproteobacteria</taxon>
        <taxon>Cardiobacteriales</taxon>
        <taxon>Cardiobacteriaceae</taxon>
        <taxon>Dichelobacter</taxon>
    </lineage>
</organism>
<protein>
    <recommendedName>
        <fullName evidence="1">Octanoyltransferase</fullName>
        <ecNumber evidence="1">2.3.1.181</ecNumber>
    </recommendedName>
    <alternativeName>
        <fullName evidence="1">Lipoate-protein ligase B</fullName>
    </alternativeName>
    <alternativeName>
        <fullName evidence="1">Lipoyl/octanoyl transferase</fullName>
    </alternativeName>
    <alternativeName>
        <fullName evidence="1">Octanoyl-[acyl-carrier-protein]-protein N-octanoyltransferase</fullName>
    </alternativeName>
</protein>
<reference key="1">
    <citation type="journal article" date="2007" name="Nat. Biotechnol.">
        <title>Genome sequence and identification of candidate vaccine antigens from the animal pathogen Dichelobacter nodosus.</title>
        <authorList>
            <person name="Myers G.S.A."/>
            <person name="Parker D."/>
            <person name="Al-Hasani K."/>
            <person name="Kennan R.M."/>
            <person name="Seemann T."/>
            <person name="Ren Q."/>
            <person name="Badger J.H."/>
            <person name="Selengut J.D."/>
            <person name="Deboy R.T."/>
            <person name="Tettelin H."/>
            <person name="Boyce J.D."/>
            <person name="McCarl V.P."/>
            <person name="Han X."/>
            <person name="Nelson W.C."/>
            <person name="Madupu R."/>
            <person name="Mohamoud Y."/>
            <person name="Holley T."/>
            <person name="Fedorova N."/>
            <person name="Khouri H."/>
            <person name="Bottomley S.P."/>
            <person name="Whittington R.J."/>
            <person name="Adler B."/>
            <person name="Songer J.G."/>
            <person name="Rood J.I."/>
            <person name="Paulsen I.T."/>
        </authorList>
    </citation>
    <scope>NUCLEOTIDE SEQUENCE [LARGE SCALE GENOMIC DNA]</scope>
    <source>
        <strain>VCS1703A</strain>
    </source>
</reference>
<proteinExistence type="inferred from homology"/>
<accession>A5EY93</accession>
<keyword id="KW-0012">Acyltransferase</keyword>
<keyword id="KW-0963">Cytoplasm</keyword>
<keyword id="KW-1185">Reference proteome</keyword>
<keyword id="KW-0808">Transferase</keyword>